<gene>
    <name evidence="1" type="primary">rplW</name>
    <name type="ordered locus">MAV_4469</name>
</gene>
<organism>
    <name type="scientific">Mycobacterium avium (strain 104)</name>
    <dbReference type="NCBI Taxonomy" id="243243"/>
    <lineage>
        <taxon>Bacteria</taxon>
        <taxon>Bacillati</taxon>
        <taxon>Actinomycetota</taxon>
        <taxon>Actinomycetes</taxon>
        <taxon>Mycobacteriales</taxon>
        <taxon>Mycobacteriaceae</taxon>
        <taxon>Mycobacterium</taxon>
        <taxon>Mycobacterium avium complex (MAC)</taxon>
    </lineage>
</organism>
<dbReference type="EMBL" id="CP000479">
    <property type="protein sequence ID" value="ABK64442.1"/>
    <property type="molecule type" value="Genomic_DNA"/>
</dbReference>
<dbReference type="RefSeq" id="WP_003873516.1">
    <property type="nucleotide sequence ID" value="NC_008595.1"/>
</dbReference>
<dbReference type="SMR" id="A0QL16"/>
<dbReference type="GeneID" id="77300188"/>
<dbReference type="KEGG" id="mav:MAV_4469"/>
<dbReference type="HOGENOM" id="CLU_037562_3_2_11"/>
<dbReference type="Proteomes" id="UP000001574">
    <property type="component" value="Chromosome"/>
</dbReference>
<dbReference type="GO" id="GO:1990904">
    <property type="term" value="C:ribonucleoprotein complex"/>
    <property type="evidence" value="ECO:0007669"/>
    <property type="project" value="UniProtKB-KW"/>
</dbReference>
<dbReference type="GO" id="GO:0005840">
    <property type="term" value="C:ribosome"/>
    <property type="evidence" value="ECO:0007669"/>
    <property type="project" value="UniProtKB-KW"/>
</dbReference>
<dbReference type="GO" id="GO:0019843">
    <property type="term" value="F:rRNA binding"/>
    <property type="evidence" value="ECO:0007669"/>
    <property type="project" value="UniProtKB-UniRule"/>
</dbReference>
<dbReference type="GO" id="GO:0003735">
    <property type="term" value="F:structural constituent of ribosome"/>
    <property type="evidence" value="ECO:0007669"/>
    <property type="project" value="InterPro"/>
</dbReference>
<dbReference type="GO" id="GO:0006412">
    <property type="term" value="P:translation"/>
    <property type="evidence" value="ECO:0007669"/>
    <property type="project" value="UniProtKB-UniRule"/>
</dbReference>
<dbReference type="FunFam" id="3.30.70.330:FF:000001">
    <property type="entry name" value="50S ribosomal protein L23"/>
    <property type="match status" value="1"/>
</dbReference>
<dbReference type="Gene3D" id="3.30.70.330">
    <property type="match status" value="1"/>
</dbReference>
<dbReference type="HAMAP" id="MF_01369_B">
    <property type="entry name" value="Ribosomal_uL23_B"/>
    <property type="match status" value="1"/>
</dbReference>
<dbReference type="InterPro" id="IPR012677">
    <property type="entry name" value="Nucleotide-bd_a/b_plait_sf"/>
</dbReference>
<dbReference type="InterPro" id="IPR013025">
    <property type="entry name" value="Ribosomal_uL23-like"/>
</dbReference>
<dbReference type="InterPro" id="IPR012678">
    <property type="entry name" value="Ribosomal_uL23/eL15/eS24_sf"/>
</dbReference>
<dbReference type="InterPro" id="IPR001014">
    <property type="entry name" value="Ribosomal_uL23_CS"/>
</dbReference>
<dbReference type="NCBIfam" id="NF004363">
    <property type="entry name" value="PRK05738.2-4"/>
    <property type="match status" value="1"/>
</dbReference>
<dbReference type="NCBIfam" id="NF004364">
    <property type="entry name" value="PRK05738.2-5"/>
    <property type="match status" value="1"/>
</dbReference>
<dbReference type="PANTHER" id="PTHR11620">
    <property type="entry name" value="60S RIBOSOMAL PROTEIN L23A"/>
    <property type="match status" value="1"/>
</dbReference>
<dbReference type="Pfam" id="PF00276">
    <property type="entry name" value="Ribosomal_L23"/>
    <property type="match status" value="1"/>
</dbReference>
<dbReference type="SUPFAM" id="SSF54189">
    <property type="entry name" value="Ribosomal proteins S24e, L23 and L15e"/>
    <property type="match status" value="1"/>
</dbReference>
<dbReference type="PROSITE" id="PS00050">
    <property type="entry name" value="RIBOSOMAL_L23"/>
    <property type="match status" value="1"/>
</dbReference>
<accession>A0QL16</accession>
<evidence type="ECO:0000255" key="1">
    <source>
        <dbReference type="HAMAP-Rule" id="MF_01369"/>
    </source>
</evidence>
<evidence type="ECO:0000305" key="2"/>
<proteinExistence type="inferred from homology"/>
<sequence>MATVTDPRDIILAPVISEKSYSLLDDNVYTFVVHPDSNKTQIKIAIEKIFSVKVASVNTANRQGKRKRTRTGFGKRKSTKRAIVTLAPGSKPIDLFGAPA</sequence>
<protein>
    <recommendedName>
        <fullName evidence="1">Large ribosomal subunit protein uL23</fullName>
    </recommendedName>
    <alternativeName>
        <fullName evidence="2">50S ribosomal protein L23</fullName>
    </alternativeName>
</protein>
<feature type="chain" id="PRO_1000068110" description="Large ribosomal subunit protein uL23">
    <location>
        <begin position="1"/>
        <end position="100"/>
    </location>
</feature>
<comment type="function">
    <text evidence="1">One of the early assembly proteins it binds 23S rRNA. One of the proteins that surrounds the polypeptide exit tunnel on the outside of the ribosome. Forms the main docking site for trigger factor binding to the ribosome.</text>
</comment>
<comment type="subunit">
    <text evidence="1">Part of the 50S ribosomal subunit. Contacts protein L29, and trigger factor when it is bound to the ribosome.</text>
</comment>
<comment type="similarity">
    <text evidence="1">Belongs to the universal ribosomal protein uL23 family.</text>
</comment>
<reference key="1">
    <citation type="submission" date="2006-10" db="EMBL/GenBank/DDBJ databases">
        <authorList>
            <person name="Fleischmann R.D."/>
            <person name="Dodson R.J."/>
            <person name="Haft D.H."/>
            <person name="Merkel J.S."/>
            <person name="Nelson W.C."/>
            <person name="Fraser C.M."/>
        </authorList>
    </citation>
    <scope>NUCLEOTIDE SEQUENCE [LARGE SCALE GENOMIC DNA]</scope>
    <source>
        <strain>104</strain>
    </source>
</reference>
<name>RL23_MYCA1</name>
<keyword id="KW-0687">Ribonucleoprotein</keyword>
<keyword id="KW-0689">Ribosomal protein</keyword>
<keyword id="KW-0694">RNA-binding</keyword>
<keyword id="KW-0699">rRNA-binding</keyword>